<organism>
    <name type="scientific">Cordyceps militaris (strain CM01)</name>
    <name type="common">Caterpillar fungus</name>
    <dbReference type="NCBI Taxonomy" id="983644"/>
    <lineage>
        <taxon>Eukaryota</taxon>
        <taxon>Fungi</taxon>
        <taxon>Dikarya</taxon>
        <taxon>Ascomycota</taxon>
        <taxon>Pezizomycotina</taxon>
        <taxon>Sordariomycetes</taxon>
        <taxon>Hypocreomycetidae</taxon>
        <taxon>Hypocreales</taxon>
        <taxon>Cordycipitaceae</taxon>
        <taxon>Cordyceps</taxon>
    </lineage>
</organism>
<protein>
    <recommendedName>
        <fullName evidence="7">Highly reducing polyketide synthase milA</fullName>
        <shortName evidence="7">HR-PKS milA</shortName>
        <ecNumber evidence="6">2.3.1.-</ecNumber>
    </recommendedName>
    <alternativeName>
        <fullName evidence="7">Cordypyrones biosynthesis cluster protein A</fullName>
    </alternativeName>
</protein>
<dbReference type="EC" id="2.3.1.-" evidence="6"/>
<dbReference type="EMBL" id="JH126407">
    <property type="protein sequence ID" value="EGX87724.1"/>
    <property type="molecule type" value="Genomic_DNA"/>
</dbReference>
<dbReference type="RefSeq" id="XP_006674543.1">
    <property type="nucleotide sequence ID" value="XM_006674480.1"/>
</dbReference>
<dbReference type="SMR" id="G3JUI8"/>
<dbReference type="STRING" id="983644.G3JUI8"/>
<dbReference type="GeneID" id="18171349"/>
<dbReference type="KEGG" id="cmt:CCM_09346"/>
<dbReference type="VEuPathDB" id="FungiDB:CCM_09346"/>
<dbReference type="eggNOG" id="KOG1202">
    <property type="taxonomic scope" value="Eukaryota"/>
</dbReference>
<dbReference type="HOGENOM" id="CLU_000022_31_0_1"/>
<dbReference type="InParanoid" id="G3JUI8"/>
<dbReference type="OMA" id="GGWLINM"/>
<dbReference type="OrthoDB" id="329835at2759"/>
<dbReference type="Proteomes" id="UP000001610">
    <property type="component" value="Unassembled WGS sequence"/>
</dbReference>
<dbReference type="GO" id="GO:0004312">
    <property type="term" value="F:fatty acid synthase activity"/>
    <property type="evidence" value="ECO:0007669"/>
    <property type="project" value="TreeGrafter"/>
</dbReference>
<dbReference type="GO" id="GO:0016491">
    <property type="term" value="F:oxidoreductase activity"/>
    <property type="evidence" value="ECO:0007669"/>
    <property type="project" value="UniProtKB-KW"/>
</dbReference>
<dbReference type="GO" id="GO:0031177">
    <property type="term" value="F:phosphopantetheine binding"/>
    <property type="evidence" value="ECO:0007669"/>
    <property type="project" value="InterPro"/>
</dbReference>
<dbReference type="GO" id="GO:0006633">
    <property type="term" value="P:fatty acid biosynthetic process"/>
    <property type="evidence" value="ECO:0007669"/>
    <property type="project" value="TreeGrafter"/>
</dbReference>
<dbReference type="GO" id="GO:0044550">
    <property type="term" value="P:secondary metabolite biosynthetic process"/>
    <property type="evidence" value="ECO:0007669"/>
    <property type="project" value="TreeGrafter"/>
</dbReference>
<dbReference type="CDD" id="cd00833">
    <property type="entry name" value="PKS"/>
    <property type="match status" value="1"/>
</dbReference>
<dbReference type="Gene3D" id="3.30.70.3290">
    <property type="match status" value="1"/>
</dbReference>
<dbReference type="Gene3D" id="3.40.47.10">
    <property type="match status" value="1"/>
</dbReference>
<dbReference type="Gene3D" id="3.40.366.10">
    <property type="entry name" value="Malonyl-Coenzyme A Acyl Carrier Protein, domain 2"/>
    <property type="match status" value="1"/>
</dbReference>
<dbReference type="Gene3D" id="3.40.50.720">
    <property type="entry name" value="NAD(P)-binding Rossmann-like Domain"/>
    <property type="match status" value="1"/>
</dbReference>
<dbReference type="Gene3D" id="3.10.129.110">
    <property type="entry name" value="Polyketide synthase dehydratase"/>
    <property type="match status" value="1"/>
</dbReference>
<dbReference type="InterPro" id="IPR001227">
    <property type="entry name" value="Ac_transferase_dom_sf"/>
</dbReference>
<dbReference type="InterPro" id="IPR036736">
    <property type="entry name" value="ACP-like_sf"/>
</dbReference>
<dbReference type="InterPro" id="IPR014043">
    <property type="entry name" value="Acyl_transferase_dom"/>
</dbReference>
<dbReference type="InterPro" id="IPR016035">
    <property type="entry name" value="Acyl_Trfase/lysoPLipase"/>
</dbReference>
<dbReference type="InterPro" id="IPR014031">
    <property type="entry name" value="Ketoacyl_synth_C"/>
</dbReference>
<dbReference type="InterPro" id="IPR014030">
    <property type="entry name" value="Ketoacyl_synth_N"/>
</dbReference>
<dbReference type="InterPro" id="IPR016036">
    <property type="entry name" value="Malonyl_transacylase_ACP-bd"/>
</dbReference>
<dbReference type="InterPro" id="IPR036291">
    <property type="entry name" value="NAD(P)-bd_dom_sf"/>
</dbReference>
<dbReference type="InterPro" id="IPR020841">
    <property type="entry name" value="PKS_Beta-ketoAc_synthase_dom"/>
</dbReference>
<dbReference type="InterPro" id="IPR042104">
    <property type="entry name" value="PKS_dehydratase_sf"/>
</dbReference>
<dbReference type="InterPro" id="IPR020807">
    <property type="entry name" value="PKS_DH"/>
</dbReference>
<dbReference type="InterPro" id="IPR049551">
    <property type="entry name" value="PKS_DH_C"/>
</dbReference>
<dbReference type="InterPro" id="IPR049552">
    <property type="entry name" value="PKS_DH_N"/>
</dbReference>
<dbReference type="InterPro" id="IPR013968">
    <property type="entry name" value="PKS_KR"/>
</dbReference>
<dbReference type="InterPro" id="IPR049900">
    <property type="entry name" value="PKS_mFAS_DH"/>
</dbReference>
<dbReference type="InterPro" id="IPR050091">
    <property type="entry name" value="PKS_NRPS_Biosynth_Enz"/>
</dbReference>
<dbReference type="InterPro" id="IPR020806">
    <property type="entry name" value="PKS_PP-bd"/>
</dbReference>
<dbReference type="InterPro" id="IPR009081">
    <property type="entry name" value="PP-bd_ACP"/>
</dbReference>
<dbReference type="InterPro" id="IPR006162">
    <property type="entry name" value="Ppantetheine_attach_site"/>
</dbReference>
<dbReference type="InterPro" id="IPR016039">
    <property type="entry name" value="Thiolase-like"/>
</dbReference>
<dbReference type="PANTHER" id="PTHR43775">
    <property type="entry name" value="FATTY ACID SYNTHASE"/>
    <property type="match status" value="1"/>
</dbReference>
<dbReference type="PANTHER" id="PTHR43775:SF20">
    <property type="entry name" value="HYBRID PKS-NRPS SYNTHETASE APDA"/>
    <property type="match status" value="1"/>
</dbReference>
<dbReference type="Pfam" id="PF00698">
    <property type="entry name" value="Acyl_transf_1"/>
    <property type="match status" value="1"/>
</dbReference>
<dbReference type="Pfam" id="PF22621">
    <property type="entry name" value="CurL-like_PKS_C"/>
    <property type="match status" value="1"/>
</dbReference>
<dbReference type="Pfam" id="PF00109">
    <property type="entry name" value="ketoacyl-synt"/>
    <property type="match status" value="1"/>
</dbReference>
<dbReference type="Pfam" id="PF02801">
    <property type="entry name" value="Ketoacyl-synt_C"/>
    <property type="match status" value="1"/>
</dbReference>
<dbReference type="Pfam" id="PF08659">
    <property type="entry name" value="KR"/>
    <property type="match status" value="1"/>
</dbReference>
<dbReference type="Pfam" id="PF21089">
    <property type="entry name" value="PKS_DH_N"/>
    <property type="match status" value="1"/>
</dbReference>
<dbReference type="Pfam" id="PF00550">
    <property type="entry name" value="PP-binding"/>
    <property type="match status" value="1"/>
</dbReference>
<dbReference type="Pfam" id="PF14765">
    <property type="entry name" value="PS-DH"/>
    <property type="match status" value="1"/>
</dbReference>
<dbReference type="SMART" id="SM00827">
    <property type="entry name" value="PKS_AT"/>
    <property type="match status" value="1"/>
</dbReference>
<dbReference type="SMART" id="SM00826">
    <property type="entry name" value="PKS_DH"/>
    <property type="match status" value="1"/>
</dbReference>
<dbReference type="SMART" id="SM00822">
    <property type="entry name" value="PKS_KR"/>
    <property type="match status" value="1"/>
</dbReference>
<dbReference type="SMART" id="SM00825">
    <property type="entry name" value="PKS_KS"/>
    <property type="match status" value="1"/>
</dbReference>
<dbReference type="SMART" id="SM00823">
    <property type="entry name" value="PKS_PP"/>
    <property type="match status" value="1"/>
</dbReference>
<dbReference type="SUPFAM" id="SSF47336">
    <property type="entry name" value="ACP-like"/>
    <property type="match status" value="1"/>
</dbReference>
<dbReference type="SUPFAM" id="SSF52151">
    <property type="entry name" value="FabD/lysophospholipase-like"/>
    <property type="match status" value="1"/>
</dbReference>
<dbReference type="SUPFAM" id="SSF51735">
    <property type="entry name" value="NAD(P)-binding Rossmann-fold domains"/>
    <property type="match status" value="1"/>
</dbReference>
<dbReference type="SUPFAM" id="SSF55048">
    <property type="entry name" value="Probable ACP-binding domain of malonyl-CoA ACP transacylase"/>
    <property type="match status" value="1"/>
</dbReference>
<dbReference type="SUPFAM" id="SSF53901">
    <property type="entry name" value="Thiolase-like"/>
    <property type="match status" value="1"/>
</dbReference>
<dbReference type="PROSITE" id="PS50075">
    <property type="entry name" value="CARRIER"/>
    <property type="match status" value="1"/>
</dbReference>
<dbReference type="PROSITE" id="PS52004">
    <property type="entry name" value="KS3_2"/>
    <property type="match status" value="1"/>
</dbReference>
<dbReference type="PROSITE" id="PS00012">
    <property type="entry name" value="PHOSPHOPANTETHEINE"/>
    <property type="match status" value="1"/>
</dbReference>
<dbReference type="PROSITE" id="PS52019">
    <property type="entry name" value="PKS_MFAS_DH"/>
    <property type="match status" value="1"/>
</dbReference>
<proteinExistence type="evidence at protein level"/>
<reference key="1">
    <citation type="journal article" date="2011" name="Genome Biol.">
        <title>Genome sequence of the insect pathogenic fungus Cordyceps militaris, a valued traditional Chinese medicine.</title>
        <authorList>
            <person name="Zheng P."/>
            <person name="Xia Y."/>
            <person name="Xiao G."/>
            <person name="Xiong C."/>
            <person name="Hu X."/>
            <person name="Zhang S."/>
            <person name="Zheng H."/>
            <person name="Huang Y."/>
            <person name="Zhou Y."/>
            <person name="Wang S."/>
            <person name="Zhao G.-P."/>
            <person name="Liu X."/>
            <person name="St Leger R.J."/>
            <person name="Wang C."/>
        </authorList>
    </citation>
    <scope>NUCLEOTIDE SEQUENCE [LARGE SCALE GENOMIC DNA]</scope>
    <source>
        <strain>CM01</strain>
    </source>
</reference>
<reference key="2">
    <citation type="journal article" date="2022" name="J. Antibiot.">
        <title>Heterologous expression of a natural product biosynthetic gene cluster from Cordyceps militaris.</title>
        <authorList>
            <person name="Gao Y.L."/>
            <person name="Yu C."/>
            <person name="Li L."/>
        </authorList>
    </citation>
    <scope>FUNCTION</scope>
    <scope>DOMAIN</scope>
    <scope>CATALYTIC ACTIVITY</scope>
    <scope>PATHWAY</scope>
</reference>
<evidence type="ECO:0000255" key="1"/>
<evidence type="ECO:0000255" key="2">
    <source>
        <dbReference type="PROSITE-ProRule" id="PRU00258"/>
    </source>
</evidence>
<evidence type="ECO:0000255" key="3">
    <source>
        <dbReference type="PROSITE-ProRule" id="PRU01348"/>
    </source>
</evidence>
<evidence type="ECO:0000255" key="4">
    <source>
        <dbReference type="PROSITE-ProRule" id="PRU01363"/>
    </source>
</evidence>
<evidence type="ECO:0000256" key="5">
    <source>
        <dbReference type="SAM" id="MobiDB-lite"/>
    </source>
</evidence>
<evidence type="ECO:0000269" key="6">
    <source>
    </source>
</evidence>
<evidence type="ECO:0000303" key="7">
    <source>
    </source>
</evidence>
<evidence type="ECO:0000305" key="8">
    <source>
    </source>
</evidence>
<feature type="chain" id="PRO_0000455745" description="Highly reducing polyketide synthase milA">
    <location>
        <begin position="1"/>
        <end position="2465"/>
    </location>
</feature>
<feature type="domain" description="Ketosynthase family 3 (KS3)" evidence="3 8">
    <location>
        <begin position="1"/>
        <end position="434"/>
    </location>
</feature>
<feature type="domain" description="PKS/mFAS DH" evidence="4">
    <location>
        <begin position="957"/>
        <end position="1267"/>
    </location>
</feature>
<feature type="domain" description="Carrier" evidence="2">
    <location>
        <begin position="2384"/>
        <end position="2459"/>
    </location>
</feature>
<feature type="region of interest" description="Disordered" evidence="5">
    <location>
        <begin position="450"/>
        <end position="476"/>
    </location>
</feature>
<feature type="region of interest" description="Malonyl-CoA:ACP transacylase (MAT) domain" evidence="1 8">
    <location>
        <begin position="567"/>
        <end position="888"/>
    </location>
</feature>
<feature type="region of interest" description="Dehydratase (DH) domain" evidence="1 8">
    <location>
        <begin position="957"/>
        <end position="1265"/>
    </location>
</feature>
<feature type="region of interest" description="N-terminal hotdog fold" evidence="4">
    <location>
        <begin position="957"/>
        <end position="1096"/>
    </location>
</feature>
<feature type="region of interest" description="C-terminal hotdog fold" evidence="4">
    <location>
        <begin position="1111"/>
        <end position="1267"/>
    </location>
</feature>
<feature type="region of interest" description="Disordered" evidence="5">
    <location>
        <begin position="1334"/>
        <end position="1367"/>
    </location>
</feature>
<feature type="region of interest" description="Ketoreductase (KR)domain" evidence="1 8">
    <location>
        <begin position="2095"/>
        <end position="2269"/>
    </location>
</feature>
<feature type="compositionally biased region" description="Low complexity" evidence="5">
    <location>
        <begin position="451"/>
        <end position="463"/>
    </location>
</feature>
<feature type="active site" description="For beta-ketoacyl synthase activity" evidence="3">
    <location>
        <position position="172"/>
    </location>
</feature>
<feature type="active site" description="For beta-ketoacyl synthase activity" evidence="3">
    <location>
        <position position="311"/>
    </location>
</feature>
<feature type="active site" description="For beta-ketoacyl synthase activity" evidence="3">
    <location>
        <position position="355"/>
    </location>
</feature>
<feature type="active site" description="Proton acceptor; for dehydratase activity" evidence="4">
    <location>
        <position position="989"/>
    </location>
</feature>
<feature type="active site" description="Proton donor; for dehydratase activity" evidence="4">
    <location>
        <position position="1174"/>
    </location>
</feature>
<feature type="modified residue" description="O-(pantetheine 4'-phosphoryl)serine" evidence="2">
    <location>
        <position position="2419"/>
    </location>
</feature>
<keyword id="KW-0012">Acyltransferase</keyword>
<keyword id="KW-0511">Multifunctional enzyme</keyword>
<keyword id="KW-0521">NADP</keyword>
<keyword id="KW-0560">Oxidoreductase</keyword>
<keyword id="KW-0596">Phosphopantetheine</keyword>
<keyword id="KW-0597">Phosphoprotein</keyword>
<keyword id="KW-1185">Reference proteome</keyword>
<keyword id="KW-0808">Transferase</keyword>
<name>MILA_CORMM</name>
<accession>G3JUI8</accession>
<gene>
    <name evidence="7" type="primary">milA</name>
    <name type="ORF">CCM_09346</name>
</gene>
<comment type="function">
    <text evidence="6">Highly reducing polyketide synthase (HR-PKS); part of the gene cluster that mediates the biosynthesis of cordypyrones A and B, 2 pyrones that show modest activities against pathogenic bacteria including methicillin-resistant Staphylococcus aureus (MRSA), Mycobacterium tuberculosis and Bacillus cereus (PubMed:34548637). The HR-PKS milA catalyzes the formation of cordypyrones A via condensation of one acetate with 10 malonate units (PubMed:34548637). Since milA lacks an enoyl reductase domain, the 2 beta-keto processing domains DH and KR of milA collaborate with the trans-enoyl reductase milB to catalyze the different levels of reduction (PubMed:34548637). The cytochrome P450 monooxygenase milC then hydroxylates the C-22 of cordypyrones A to yield cordypyrones B (PubMed:34548637).</text>
</comment>
<comment type="catalytic activity">
    <reaction evidence="6">
        <text>10 malonyl-CoA + acetyl-CoA + 3 AH2 + 8 NADPH + 18 H(+) = cordypyrone A + 3 A + 10 CO2 + 8 NADP(+) + 11 CoA + 8 H2O</text>
        <dbReference type="Rhea" id="RHEA:71139"/>
        <dbReference type="ChEBI" id="CHEBI:13193"/>
        <dbReference type="ChEBI" id="CHEBI:15377"/>
        <dbReference type="ChEBI" id="CHEBI:15378"/>
        <dbReference type="ChEBI" id="CHEBI:16526"/>
        <dbReference type="ChEBI" id="CHEBI:17499"/>
        <dbReference type="ChEBI" id="CHEBI:57287"/>
        <dbReference type="ChEBI" id="CHEBI:57288"/>
        <dbReference type="ChEBI" id="CHEBI:57384"/>
        <dbReference type="ChEBI" id="CHEBI:57783"/>
        <dbReference type="ChEBI" id="CHEBI:58349"/>
        <dbReference type="ChEBI" id="CHEBI:190187"/>
    </reaction>
    <physiologicalReaction direction="left-to-right" evidence="6">
        <dbReference type="Rhea" id="RHEA:71140"/>
    </physiologicalReaction>
</comment>
<comment type="cofactor">
    <cofactor evidence="1">
        <name>pantetheine 4'-phosphate</name>
        <dbReference type="ChEBI" id="CHEBI:47942"/>
    </cofactor>
    <text evidence="1">Binds 1 phosphopantetheine covalently.</text>
</comment>
<comment type="pathway">
    <text evidence="6">Secondary metabolite biosynthesis.</text>
</comment>
<comment type="domain">
    <text evidence="8">Multidomain protein; including a ketosynthase (KS) that catalyzes repeated decarboxylative condensation to elongate the polyketide backbone; a malonyl-CoA:ACP transacylase (MAT) that selects and transfers the extender unit malonyl-CoA; a dehydratase (DH) domain that reduces hydroxyl groups to enoyl groups; a ketoreductase (KR) domain that catalyzes beta-ketoreduction steps; and an acyl-carrier protein (ACP) that serves as the tether of the growing and completed polyketide via its phosphopantetheinyl arm.</text>
</comment>
<sequence length="2465" mass="265234">MEPIAIVGSACRFPGDATSPSKLWELLKAPRDLSQEVKRFNAKGFYHENGHHHGASNVMAAYTLESDPMEFDPQFFNIQPGEAESMDPQHRLLLETTYEGLEQAGIPIESLRGSDTSAFIGVMSADYTTMVFFDSECTPTYSATGTSRAILSNRLSHAFDWRGASMTLDTACSSSLVAIHLAVRELRSGSSRVAVAGGTNLILSADPFISETNLDMLSPQGKCHMWDARANGYARGEGISVVVLKTLRDALADGDHIECIIRETGVNQDGHTPGITMPNPEAQTRLIRDVYSRAGLDLSKPEDRCQYFEAHGTGTKAGDKVESRAIHDAFFPETGGEQAPLEPLYVGSVKTIIGHTEGTAGVAGVLRASLAIQNGTIPPNLHFESLNPELKPYYGNLQIATEAIPWPELHGGVRRASVNSFGFGGANCHVILEGYLPSYGDDALREVVSKPSLSSSPSLSPTSTSPPTPRTPANSLPFLISASSEKTLRKLVQRYIDHVGQNPNVDMGNLAWTLFKNRSALNFRLAVPAPTPEALITTLESVLKQPAGGPKSSIIRTVSQPKRLLGVFTGQGAQWATMGRQLVQKSARAAATVDRLDAALAALPDPYRPTWSLKAQILAEKKASRIDESAVSQPLCTVIQIILVDLLRNAGVDFDGVLGHSSGEIAAAYAAGFLSAEDAVKIAYTRGLCAHLARGQQGEKGGMIAAGMTHPDAKDLCENEAVLGRISVAAYNSPTSVTLSGDSDVIDQVSVVLEDEDKFNRVLRVQTAYHSHHMEACVGLYRKALAACNITVLNPAQHVPWFSSVYGGSVMSATSNIASEYWIQNMVQPVLFSEAVAAASQTEHQDALPTLAEIGPHPALKSPVLETLKSLGIDKVAYCGTLSRAVDDVDALSAFFGWFWSVSAQSGLQLDRYAAQFSQNKLVSLRNLPSYPWDHTHSYEFESRESHAHRFRELPCHPLLGVRTNTCGDAEYRWKNFLSTEEIPWLTGHQIQGQTLVPAAMFLIMAAEAATIAAGSLGLQVRLIELHDSTIHRALALDDDKSTETLFYLSGVEVTSSPNEGSILSATYHCDAATSKSSSRLTSIASGKVQLFVGGDASRTLPNSALGSGQLNEIDVDTFYDNLRTIGYNYNGAFRSIASLQRTTNWANGTIAAPTSTDPATSPSWVPLHPAVLDVSFQAVFAALSYPGDGRLQTLHVPTTIKRLTISPAALSSGAIPAGGFAFNAVSYMLDRRTICGDIEVGIAGQEESIFKVEGLTVSPVAPVTADDDKHMFADMVLCVAEPSTALLPDVPEQLLANTLSQNYGEAENAVSNKHSSLENGHLTNGHCLANGGHSTNGLTNGHASTNGHGSTNGHISTNGHSTNGDVLTNGHSVNGHAHSNGHSENGAISVNKPTAGGYTADKARSYHIVAGLLKQITDRYPKARILERVTDNASEVLNVFTAIGGRLSSYALDGIAESEFDAIADSRDDGSSLKRVSLQLESPSFLETNAGGEYDVVVLRDGHATDKGTLQLLRHLLRPGGYLLLIHELDQSLASLEGDSELWSGRFTEAGFSKMEAQGSSKSGRFSIMATMATNDAVDALRQPMVSVGAKIPTLIIIGGETPVTVDLIGKIRALLAPFCQVVQTVKSLAHLDDSAVAEKAFVLSLTELDSDLYRDLSEKTFTKLQELTTRSDRLIWVVSGSQGRNPYANMIKGTLRCLIEECSHLVTQILDIEDNVSGAGQFISDAVLRLHNLHSMENASKTLWSHEPELHLRNGQPFISRYLPNKQLDLGYNSLQRHVQVELQPTAGVLQLSADKSALSLERLRVAALPSSHLAANELETEIIVRYSQSVAVHVPALGYLYPVTGTDVQTGRVVAALSTENRSRVSVHKATLVPLIGLSDDQERSLPERLQAFFLAATIMQRCPPFTSAVVHEASNSLTQLLVDAGRKSGVQFIFTTSDASRVDEIQEQGWKFIARHGSTRQLSKLVQPDTLMCVDCTQTGSGDSLAAMGLQVPSGVAVLTASDFVRPQSFKYRKIEDQAVHEALKAAVAETTSLAAEKSDLGADGMIQIQDLPQSFAFGVPAKTISWVNELPVRATVLPALEECHFNPDRTYFLVGMAGSLGLSTVSYMISRGARHFALSSRNPQVDAAWIAAQRTKYGAVVNTFALDITDKAALTKTIAAIRATMPPIGGVANGALIIEDSLFADLTYKQMTRALGPKVDGSRYLDEAFGQDDLEFFILYSSLVSIAGNTGQIAYAVANSFMVSLAHQRRQRGLAASVINLTGVSGIGFITRTGHNIIARSKALGYDIISESDYCYIFAESVLASPSTSPHGPEVSSSLRYVDVARDKVVPPWAYDAKFGHYLLDRQAPATNGAAGESDNGGHLSLDVLKAAPPAECYDMIFRAFQTVLQKLLRLPADQPVPAEVQILDLGVDSLVAVKMRQWFLKELQVNMPVMKLIGGATVSQVVWSVVHQILPESAK</sequence>